<comment type="function">
    <text evidence="1">As a component of IFT complex A (IFT-A), a complex required for retrograde ciliary transport and entry into cilia of G protein-coupled receptors (GPCRs), it is involved in ciliogenesis. Involved in retrograde ciliary transport along microtubules from the ciliary tip to the base.</text>
</comment>
<comment type="subunit">
    <text evidence="1">Component of the IFT complex A (IFT-A) complex.</text>
</comment>
<comment type="subcellular location">
    <subcellularLocation>
        <location evidence="1">Cytoplasm</location>
        <location evidence="1">Cytoskeleton</location>
    </subcellularLocation>
    <subcellularLocation>
        <location evidence="2">Cell projection</location>
        <location evidence="2">Cilium</location>
    </subcellularLocation>
    <text evidence="1">Associated with microtubules.</text>
</comment>
<comment type="similarity">
    <text evidence="4">Belongs to the IFT43 family.</text>
</comment>
<keyword id="KW-0966">Cell projection</keyword>
<keyword id="KW-0970">Cilium biogenesis/degradation</keyword>
<keyword id="KW-0963">Cytoplasm</keyword>
<keyword id="KW-0206">Cytoskeleton</keyword>
<keyword id="KW-1185">Reference proteome</keyword>
<name>IFT43_XENTR</name>
<dbReference type="EMBL" id="CR926158">
    <property type="protein sequence ID" value="CAJ82762.1"/>
    <property type="molecule type" value="mRNA"/>
</dbReference>
<dbReference type="EMBL" id="BC158978">
    <property type="protein sequence ID" value="AAI58979.1"/>
    <property type="molecule type" value="mRNA"/>
</dbReference>
<dbReference type="RefSeq" id="NP_001016535.1">
    <property type="nucleotide sequence ID" value="NM_001016535.1"/>
</dbReference>
<dbReference type="SMR" id="Q28CW2"/>
<dbReference type="FunCoup" id="Q28CW2">
    <property type="interactions" value="99"/>
</dbReference>
<dbReference type="STRING" id="8364.ENSXETP00000014862"/>
<dbReference type="PaxDb" id="8364-ENSXETP00000028939"/>
<dbReference type="GeneID" id="549289"/>
<dbReference type="KEGG" id="xtr:549289"/>
<dbReference type="AGR" id="Xenbase:XB-GENE-5909249"/>
<dbReference type="CTD" id="112752"/>
<dbReference type="Xenbase" id="XB-GENE-5909249">
    <property type="gene designation" value="ift43"/>
</dbReference>
<dbReference type="eggNOG" id="ENOG502RXJ2">
    <property type="taxonomic scope" value="Eukaryota"/>
</dbReference>
<dbReference type="HOGENOM" id="CLU_104337_0_0_1"/>
<dbReference type="InParanoid" id="Q28CW2"/>
<dbReference type="OMA" id="CLGNAEE"/>
<dbReference type="OrthoDB" id="206950at2759"/>
<dbReference type="PhylomeDB" id="Q28CW2"/>
<dbReference type="TreeFam" id="TF323566"/>
<dbReference type="Proteomes" id="UP000008143">
    <property type="component" value="Chromosome 8"/>
</dbReference>
<dbReference type="Bgee" id="ENSXETG00000013218">
    <property type="expression patterns" value="Expressed in testis and 13 other cell types or tissues"/>
</dbReference>
<dbReference type="GO" id="GO:0005929">
    <property type="term" value="C:cilium"/>
    <property type="evidence" value="ECO:0000250"/>
    <property type="project" value="UniProtKB"/>
</dbReference>
<dbReference type="GO" id="GO:0005737">
    <property type="term" value="C:cytoplasm"/>
    <property type="evidence" value="ECO:0007669"/>
    <property type="project" value="UniProtKB-KW"/>
</dbReference>
<dbReference type="GO" id="GO:0005856">
    <property type="term" value="C:cytoskeleton"/>
    <property type="evidence" value="ECO:0007669"/>
    <property type="project" value="UniProtKB-SubCell"/>
</dbReference>
<dbReference type="GO" id="GO:0030991">
    <property type="term" value="C:intraciliary transport particle A"/>
    <property type="evidence" value="ECO:0000250"/>
    <property type="project" value="UniProtKB"/>
</dbReference>
<dbReference type="GO" id="GO:0060271">
    <property type="term" value="P:cilium assembly"/>
    <property type="evidence" value="ECO:0000250"/>
    <property type="project" value="UniProtKB"/>
</dbReference>
<dbReference type="GO" id="GO:0035721">
    <property type="term" value="P:intraciliary retrograde transport"/>
    <property type="evidence" value="ECO:0000250"/>
    <property type="project" value="UniProtKB"/>
</dbReference>
<dbReference type="InterPro" id="IPR029302">
    <property type="entry name" value="IFT43"/>
</dbReference>
<dbReference type="PANTHER" id="PTHR33724">
    <property type="entry name" value="INTRAFLAGELLAR TRANSPORT PROTEIN 43 HOMOLOG"/>
    <property type="match status" value="1"/>
</dbReference>
<dbReference type="PANTHER" id="PTHR33724:SF1">
    <property type="entry name" value="INTRAFLAGELLAR TRANSPORT PROTEIN 43 HOMOLOG"/>
    <property type="match status" value="1"/>
</dbReference>
<dbReference type="Pfam" id="PF15305">
    <property type="entry name" value="IFT43"/>
    <property type="match status" value="1"/>
</dbReference>
<feature type="chain" id="PRO_0000254044" description="Intraflagellar transport protein 43 homolog">
    <location>
        <begin position="1"/>
        <end position="201"/>
    </location>
</feature>
<feature type="region of interest" description="Disordered" evidence="3">
    <location>
        <begin position="1"/>
        <end position="100"/>
    </location>
</feature>
<feature type="compositionally biased region" description="Basic residues" evidence="3">
    <location>
        <begin position="15"/>
        <end position="24"/>
    </location>
</feature>
<feature type="compositionally biased region" description="Polar residues" evidence="3">
    <location>
        <begin position="26"/>
        <end position="40"/>
    </location>
</feature>
<feature type="compositionally biased region" description="Basic and acidic residues" evidence="3">
    <location>
        <begin position="68"/>
        <end position="78"/>
    </location>
</feature>
<feature type="compositionally biased region" description="Acidic residues" evidence="3">
    <location>
        <begin position="84"/>
        <end position="100"/>
    </location>
</feature>
<proteinExistence type="evidence at transcript level"/>
<organism>
    <name type="scientific">Xenopus tropicalis</name>
    <name type="common">Western clawed frog</name>
    <name type="synonym">Silurana tropicalis</name>
    <dbReference type="NCBI Taxonomy" id="8364"/>
    <lineage>
        <taxon>Eukaryota</taxon>
        <taxon>Metazoa</taxon>
        <taxon>Chordata</taxon>
        <taxon>Craniata</taxon>
        <taxon>Vertebrata</taxon>
        <taxon>Euteleostomi</taxon>
        <taxon>Amphibia</taxon>
        <taxon>Batrachia</taxon>
        <taxon>Anura</taxon>
        <taxon>Pipoidea</taxon>
        <taxon>Pipidae</taxon>
        <taxon>Xenopodinae</taxon>
        <taxon>Xenopus</taxon>
        <taxon>Silurana</taxon>
    </lineage>
</organism>
<reference key="1">
    <citation type="submission" date="2006-06" db="EMBL/GenBank/DDBJ databases">
        <authorList>
            <consortium name="Sanger Xenopus tropicalis EST/cDNA project"/>
        </authorList>
    </citation>
    <scope>NUCLEOTIDE SEQUENCE [LARGE SCALE MRNA]</scope>
    <source>
        <tissue>Neurula</tissue>
    </source>
</reference>
<reference key="2">
    <citation type="submission" date="2008-02" db="EMBL/GenBank/DDBJ databases">
        <authorList>
            <consortium name="NIH - Xenopus Gene Collection (XGC) project"/>
        </authorList>
    </citation>
    <scope>NUCLEOTIDE SEQUENCE [LARGE SCALE MRNA]</scope>
    <source>
        <tissue>Gastrula</tissue>
    </source>
</reference>
<gene>
    <name type="primary">ift43</name>
    <name type="ORF">TNeu143e16.1</name>
</gene>
<accession>Q28CW2</accession>
<accession>B0JYZ7</accession>
<sequence>MEDVLDLGEAPSRRSGVKMGRRARASQENQQETADASRNQPGREGPPKPLRQGGWADDSSGPSKSTKRMTEDVEDSRLKQQSLDESDEGEDIPVIPDLEDVQEEDLALQVASPPSVQVNRVLTYKDLDNDLMRHAAFQTLDGDIDLKLLTKVLSPEPEVREENVQWDWDLLFTEVSSELITEWDVGKMEKEDMLKPSPLVS</sequence>
<evidence type="ECO:0000250" key="1">
    <source>
        <dbReference type="UniProtKB" id="Q96FT9"/>
    </source>
</evidence>
<evidence type="ECO:0000250" key="2">
    <source>
        <dbReference type="UniProtKB" id="Q9DA69"/>
    </source>
</evidence>
<evidence type="ECO:0000256" key="3">
    <source>
        <dbReference type="SAM" id="MobiDB-lite"/>
    </source>
</evidence>
<evidence type="ECO:0000305" key="4"/>
<protein>
    <recommendedName>
        <fullName>Intraflagellar transport protein 43 homolog</fullName>
    </recommendedName>
</protein>